<reference key="1">
    <citation type="submission" date="2004-02" db="EMBL/GenBank/DDBJ databases">
        <authorList>
            <consortium name="NIH - Zebrafish Gene Collection (ZGC) project"/>
        </authorList>
    </citation>
    <scope>NUCLEOTIDE SEQUENCE [LARGE SCALE MRNA]</scope>
    <source>
        <tissue>Kidney</tissue>
    </source>
</reference>
<gene>
    <name type="primary">yipf4</name>
    <name type="ORF">zgc:77069</name>
</gene>
<accession>Q6NYF1</accession>
<keyword id="KW-0333">Golgi apparatus</keyword>
<keyword id="KW-0472">Membrane</keyword>
<keyword id="KW-1185">Reference proteome</keyword>
<keyword id="KW-0812">Transmembrane</keyword>
<keyword id="KW-1133">Transmembrane helix</keyword>
<sequence length="237" mass="26630">MQFSPTNGDFTFVSSTDAEELSGTIDAPDITLNMGPESNRDTYATTFLRQRGYGWLLEVEEEESEDTKPLLEELDIDLKDIYYKIRCVLMPMPSLGFNRQVVRDNPDFWGPLAVVLLFSMISIYGQFRVVSWIITIWIFGSLTIFLLARVLGGEVSYGQVLGVIGYSLLPLIVIAPLLLVIGGFEVVSTLIKLFGVFWAAYSAASLLVGDEFKTKKPLLIYPIFLLYIYFLSLYTGV</sequence>
<dbReference type="EMBL" id="BC066619">
    <property type="protein sequence ID" value="AAH66619.1"/>
    <property type="molecule type" value="mRNA"/>
</dbReference>
<dbReference type="RefSeq" id="NP_998056.1">
    <property type="nucleotide sequence ID" value="NM_212891.1"/>
</dbReference>
<dbReference type="FunCoup" id="Q6NYF1">
    <property type="interactions" value="998"/>
</dbReference>
<dbReference type="STRING" id="7955.ENSDARP00000045098"/>
<dbReference type="PaxDb" id="7955-ENSDARP00000045098"/>
<dbReference type="Ensembl" id="ENSDART00000045099">
    <property type="protein sequence ID" value="ENSDARP00000045098"/>
    <property type="gene ID" value="ENSDARG00000030957"/>
</dbReference>
<dbReference type="Ensembl" id="ENSDART00000187383">
    <property type="protein sequence ID" value="ENSDARP00000150916"/>
    <property type="gene ID" value="ENSDARG00000109994"/>
</dbReference>
<dbReference type="GeneID" id="405827"/>
<dbReference type="KEGG" id="dre:405827"/>
<dbReference type="AGR" id="ZFIN:ZDB-GENE-040426-2253"/>
<dbReference type="CTD" id="84272"/>
<dbReference type="ZFIN" id="ZDB-GENE-040426-2253">
    <property type="gene designation" value="yipf4"/>
</dbReference>
<dbReference type="eggNOG" id="KOG3103">
    <property type="taxonomic scope" value="Eukaryota"/>
</dbReference>
<dbReference type="HOGENOM" id="CLU_072083_0_0_1"/>
<dbReference type="InParanoid" id="Q6NYF1"/>
<dbReference type="OMA" id="SWIITMW"/>
<dbReference type="OrthoDB" id="411251at2759"/>
<dbReference type="PhylomeDB" id="Q6NYF1"/>
<dbReference type="TreeFam" id="TF315055"/>
<dbReference type="PRO" id="PR:Q6NYF1"/>
<dbReference type="Proteomes" id="UP000000437">
    <property type="component" value="Alternate scaffold 17"/>
</dbReference>
<dbReference type="Proteomes" id="UP000000437">
    <property type="component" value="Chromosome 17"/>
</dbReference>
<dbReference type="Bgee" id="ENSDARG00000030957">
    <property type="expression patterns" value="Expressed in swim bladder and 27 other cell types or tissues"/>
</dbReference>
<dbReference type="GO" id="GO:0016020">
    <property type="term" value="C:membrane"/>
    <property type="evidence" value="ECO:0007669"/>
    <property type="project" value="UniProtKB-KW"/>
</dbReference>
<dbReference type="GO" id="GO:0005802">
    <property type="term" value="C:trans-Golgi network"/>
    <property type="evidence" value="ECO:0000318"/>
    <property type="project" value="GO_Central"/>
</dbReference>
<dbReference type="GO" id="GO:0006888">
    <property type="term" value="P:endoplasmic reticulum to Golgi vesicle-mediated transport"/>
    <property type="evidence" value="ECO:0000318"/>
    <property type="project" value="GO_Central"/>
</dbReference>
<dbReference type="GO" id="GO:0048280">
    <property type="term" value="P:vesicle fusion with Golgi apparatus"/>
    <property type="evidence" value="ECO:0000318"/>
    <property type="project" value="GO_Central"/>
</dbReference>
<dbReference type="InterPro" id="IPR045231">
    <property type="entry name" value="Yip1/4-like"/>
</dbReference>
<dbReference type="InterPro" id="IPR006977">
    <property type="entry name" value="Yip1_dom"/>
</dbReference>
<dbReference type="PANTHER" id="PTHR21236">
    <property type="entry name" value="GOLGI MEMBRANE PROTEIN YIP1"/>
    <property type="match status" value="1"/>
</dbReference>
<dbReference type="PANTHER" id="PTHR21236:SF7">
    <property type="entry name" value="PROTEIN YIPF4"/>
    <property type="match status" value="1"/>
</dbReference>
<dbReference type="Pfam" id="PF04893">
    <property type="entry name" value="Yip1"/>
    <property type="match status" value="1"/>
</dbReference>
<comment type="function">
    <text evidence="1">Involved in the maintenance of the Golgi structure.</text>
</comment>
<comment type="subcellular location">
    <subcellularLocation>
        <location evidence="1">Golgi apparatus</location>
        <location evidence="1">cis-Golgi network membrane</location>
        <topology>Multi-pass membrane protein</topology>
    </subcellularLocation>
</comment>
<comment type="similarity">
    <text evidence="3">Belongs to the YIP1 family.</text>
</comment>
<name>YIPF4_DANRE</name>
<organism>
    <name type="scientific">Danio rerio</name>
    <name type="common">Zebrafish</name>
    <name type="synonym">Brachydanio rerio</name>
    <dbReference type="NCBI Taxonomy" id="7955"/>
    <lineage>
        <taxon>Eukaryota</taxon>
        <taxon>Metazoa</taxon>
        <taxon>Chordata</taxon>
        <taxon>Craniata</taxon>
        <taxon>Vertebrata</taxon>
        <taxon>Euteleostomi</taxon>
        <taxon>Actinopterygii</taxon>
        <taxon>Neopterygii</taxon>
        <taxon>Teleostei</taxon>
        <taxon>Ostariophysi</taxon>
        <taxon>Cypriniformes</taxon>
        <taxon>Danionidae</taxon>
        <taxon>Danioninae</taxon>
        <taxon>Danio</taxon>
    </lineage>
</organism>
<evidence type="ECO:0000250" key="1">
    <source>
        <dbReference type="UniProtKB" id="Q9BSR8"/>
    </source>
</evidence>
<evidence type="ECO:0000255" key="2"/>
<evidence type="ECO:0000305" key="3"/>
<feature type="chain" id="PRO_0000242636" description="Protein YIPF4">
    <location>
        <begin position="1"/>
        <end position="237"/>
    </location>
</feature>
<feature type="topological domain" description="Cytoplasmic" evidence="1">
    <location>
        <begin position="1"/>
        <end position="106"/>
    </location>
</feature>
<feature type="transmembrane region" description="Helical" evidence="2">
    <location>
        <begin position="107"/>
        <end position="127"/>
    </location>
</feature>
<feature type="topological domain" description="Lumenal" evidence="3">
    <location>
        <begin position="128"/>
        <end position="131"/>
    </location>
</feature>
<feature type="transmembrane region" description="Helical" evidence="2">
    <location>
        <begin position="132"/>
        <end position="152"/>
    </location>
</feature>
<feature type="topological domain" description="Cytoplasmic" evidence="3">
    <location>
        <begin position="153"/>
        <end position="160"/>
    </location>
</feature>
<feature type="transmembrane region" description="Helical" evidence="2">
    <location>
        <begin position="161"/>
        <end position="181"/>
    </location>
</feature>
<feature type="topological domain" description="Lumenal" evidence="3">
    <location>
        <begin position="182"/>
        <end position="188"/>
    </location>
</feature>
<feature type="transmembrane region" description="Helical" evidence="2">
    <location>
        <begin position="189"/>
        <end position="209"/>
    </location>
</feature>
<feature type="topological domain" description="Cytoplasmic" evidence="3">
    <location>
        <begin position="210"/>
        <end position="216"/>
    </location>
</feature>
<feature type="transmembrane region" description="Helical" evidence="2">
    <location>
        <begin position="217"/>
        <end position="237"/>
    </location>
</feature>
<proteinExistence type="evidence at transcript level"/>
<protein>
    <recommendedName>
        <fullName>Protein YIPF4</fullName>
    </recommendedName>
    <alternativeName>
        <fullName>YIP1 family member 4</fullName>
    </alternativeName>
</protein>